<feature type="chain" id="PRO_1000086972" description="Large ribosomal subunit protein bL21">
    <location>
        <begin position="1"/>
        <end position="103"/>
    </location>
</feature>
<gene>
    <name evidence="1" type="primary">rplU</name>
    <name type="ordered locus">Caur_2318</name>
</gene>
<organism>
    <name type="scientific">Chloroflexus aurantiacus (strain ATCC 29366 / DSM 635 / J-10-fl)</name>
    <dbReference type="NCBI Taxonomy" id="324602"/>
    <lineage>
        <taxon>Bacteria</taxon>
        <taxon>Bacillati</taxon>
        <taxon>Chloroflexota</taxon>
        <taxon>Chloroflexia</taxon>
        <taxon>Chloroflexales</taxon>
        <taxon>Chloroflexineae</taxon>
        <taxon>Chloroflexaceae</taxon>
        <taxon>Chloroflexus</taxon>
    </lineage>
</organism>
<reference key="1">
    <citation type="journal article" date="2011" name="BMC Genomics">
        <title>Complete genome sequence of the filamentous anoxygenic phototrophic bacterium Chloroflexus aurantiacus.</title>
        <authorList>
            <person name="Tang K.H."/>
            <person name="Barry K."/>
            <person name="Chertkov O."/>
            <person name="Dalin E."/>
            <person name="Han C.S."/>
            <person name="Hauser L.J."/>
            <person name="Honchak B.M."/>
            <person name="Karbach L.E."/>
            <person name="Land M.L."/>
            <person name="Lapidus A."/>
            <person name="Larimer F.W."/>
            <person name="Mikhailova N."/>
            <person name="Pitluck S."/>
            <person name="Pierson B.K."/>
            <person name="Blankenship R.E."/>
        </authorList>
    </citation>
    <scope>NUCLEOTIDE SEQUENCE [LARGE SCALE GENOMIC DNA]</scope>
    <source>
        <strain>ATCC 29366 / DSM 635 / J-10-fl</strain>
    </source>
</reference>
<name>RL21_CHLAA</name>
<proteinExistence type="inferred from homology"/>
<dbReference type="EMBL" id="CP000909">
    <property type="protein sequence ID" value="ABY35527.1"/>
    <property type="molecule type" value="Genomic_DNA"/>
</dbReference>
<dbReference type="RefSeq" id="WP_012258181.1">
    <property type="nucleotide sequence ID" value="NC_010175.1"/>
</dbReference>
<dbReference type="RefSeq" id="YP_001635916.1">
    <property type="nucleotide sequence ID" value="NC_010175.1"/>
</dbReference>
<dbReference type="SMR" id="A9WGJ5"/>
<dbReference type="FunCoup" id="A9WGJ5">
    <property type="interactions" value="363"/>
</dbReference>
<dbReference type="STRING" id="324602.Caur_2318"/>
<dbReference type="EnsemblBacteria" id="ABY35527">
    <property type="protein sequence ID" value="ABY35527"/>
    <property type="gene ID" value="Caur_2318"/>
</dbReference>
<dbReference type="KEGG" id="cau:Caur_2318"/>
<dbReference type="PATRIC" id="fig|324602.8.peg.2625"/>
<dbReference type="eggNOG" id="COG0261">
    <property type="taxonomic scope" value="Bacteria"/>
</dbReference>
<dbReference type="HOGENOM" id="CLU_061463_3_2_0"/>
<dbReference type="InParanoid" id="A9WGJ5"/>
<dbReference type="Proteomes" id="UP000002008">
    <property type="component" value="Chromosome"/>
</dbReference>
<dbReference type="GO" id="GO:0005737">
    <property type="term" value="C:cytoplasm"/>
    <property type="evidence" value="ECO:0007669"/>
    <property type="project" value="UniProtKB-ARBA"/>
</dbReference>
<dbReference type="GO" id="GO:1990904">
    <property type="term" value="C:ribonucleoprotein complex"/>
    <property type="evidence" value="ECO:0007669"/>
    <property type="project" value="UniProtKB-KW"/>
</dbReference>
<dbReference type="GO" id="GO:0005840">
    <property type="term" value="C:ribosome"/>
    <property type="evidence" value="ECO:0007669"/>
    <property type="project" value="UniProtKB-KW"/>
</dbReference>
<dbReference type="GO" id="GO:0019843">
    <property type="term" value="F:rRNA binding"/>
    <property type="evidence" value="ECO:0007669"/>
    <property type="project" value="UniProtKB-UniRule"/>
</dbReference>
<dbReference type="GO" id="GO:0003735">
    <property type="term" value="F:structural constituent of ribosome"/>
    <property type="evidence" value="ECO:0000318"/>
    <property type="project" value="GO_Central"/>
</dbReference>
<dbReference type="GO" id="GO:0006412">
    <property type="term" value="P:translation"/>
    <property type="evidence" value="ECO:0007669"/>
    <property type="project" value="UniProtKB-UniRule"/>
</dbReference>
<dbReference type="HAMAP" id="MF_01363">
    <property type="entry name" value="Ribosomal_bL21"/>
    <property type="match status" value="1"/>
</dbReference>
<dbReference type="InterPro" id="IPR028909">
    <property type="entry name" value="bL21-like"/>
</dbReference>
<dbReference type="InterPro" id="IPR036164">
    <property type="entry name" value="bL21-like_sf"/>
</dbReference>
<dbReference type="InterPro" id="IPR001787">
    <property type="entry name" value="Ribosomal_bL21"/>
</dbReference>
<dbReference type="InterPro" id="IPR018258">
    <property type="entry name" value="Ribosomal_bL21_CS"/>
</dbReference>
<dbReference type="NCBIfam" id="TIGR00061">
    <property type="entry name" value="L21"/>
    <property type="match status" value="1"/>
</dbReference>
<dbReference type="PANTHER" id="PTHR21349">
    <property type="entry name" value="50S RIBOSOMAL PROTEIN L21"/>
    <property type="match status" value="1"/>
</dbReference>
<dbReference type="PANTHER" id="PTHR21349:SF0">
    <property type="entry name" value="LARGE RIBOSOMAL SUBUNIT PROTEIN BL21M"/>
    <property type="match status" value="1"/>
</dbReference>
<dbReference type="Pfam" id="PF00829">
    <property type="entry name" value="Ribosomal_L21p"/>
    <property type="match status" value="1"/>
</dbReference>
<dbReference type="SUPFAM" id="SSF141091">
    <property type="entry name" value="L21p-like"/>
    <property type="match status" value="1"/>
</dbReference>
<dbReference type="PROSITE" id="PS01169">
    <property type="entry name" value="RIBOSOMAL_L21"/>
    <property type="match status" value="1"/>
</dbReference>
<keyword id="KW-1185">Reference proteome</keyword>
<keyword id="KW-0687">Ribonucleoprotein</keyword>
<keyword id="KW-0689">Ribosomal protein</keyword>
<keyword id="KW-0694">RNA-binding</keyword>
<keyword id="KW-0699">rRNA-binding</keyword>
<protein>
    <recommendedName>
        <fullName evidence="1">Large ribosomal subunit protein bL21</fullName>
    </recommendedName>
    <alternativeName>
        <fullName evidence="2">50S ribosomal protein L21</fullName>
    </alternativeName>
</protein>
<comment type="function">
    <text evidence="1">This protein binds to 23S rRNA in the presence of protein L20.</text>
</comment>
<comment type="subunit">
    <text evidence="1">Part of the 50S ribosomal subunit. Contacts protein L20.</text>
</comment>
<comment type="similarity">
    <text evidence="1">Belongs to the bacterial ribosomal protein bL21 family.</text>
</comment>
<sequence length="103" mass="11698">MYAIIRDRGMQYRVEPGQVLTIDLISAEPGSQIELGEVLLVGDAEQVKVGSPLVEGAVVRAEVLGEQKGDKIVVFRYRNKTRYRRRTGHRQRYTKIRISEIVA</sequence>
<evidence type="ECO:0000255" key="1">
    <source>
        <dbReference type="HAMAP-Rule" id="MF_01363"/>
    </source>
</evidence>
<evidence type="ECO:0000305" key="2"/>
<accession>A9WGJ5</accession>